<accession>A8XG63</accession>
<protein>
    <recommendedName>
        <fullName>Nuclear cap-binding protein subunit 1</fullName>
    </recommendedName>
    <alternativeName>
        <fullName>80 kDa nuclear cap-binding protein</fullName>
        <shortName>CBP80</shortName>
        <shortName>NCBP 80 kDa subunit</shortName>
    </alternativeName>
</protein>
<sequence length="793" mass="91762">MSRRRQNDEEDEIQMKRRRGAPLIGDVEKKLQEVIGKVGDKNTGSSIEANLEKLTAFLHDDLEKYRSSIIDIVAGCAIYLPNRVTVYTTLVGLLNAKNFNFGGDVVEKLIAEQQDLLLKQKYQEAQNLAIFLCDLGNSGVLTAQSIGEYLESFIAAAFEENMPQVRNDYYIQTVLRCLPWIGKELTEKAQEQMENIVEAVGKYLEMRNKNHVPLLRVWREGSTDQEQEDYLESLSAQIENLRTANWMQNHIPRYYNTFEAVLQDALQHNLPSFSSPEHTSDMIYPYPLVVFRLFQDADCGTDSQLPSGHSIDRFLFEGEISWIIEKNQFNRKSCARELLAFADENPTAPVGFLIFETIFGQMLRLPHAPYPAIFHCSLVLELLKLKPNDYPNILCKTVDLIFSRADSMQPICIDRMVDWFSFHLSNFQYRYTWDEWKDCISNDEFSGRQVFLREVIEKCRRLGSYEKIIAALPSDFVKIHPASPEIRYLLDEEDAMSQRAETFTQMFQERQPADAFLKELKSTDENDELPYNINEFGVFVTVMLKMASKTYSHNFSALFRYKDTLKTVCDAAEQYQEKLLETLYSCWKSNQQMLMILTDKLLKMQIIDCSSVVGWLFDEKMWQEHNRQWLFEVLNQALEKLTRQINVVEKDIKDLTEKVESKEKVTEAGDVKMEEETVVDEKLKGEMEELENHKEKLDRMVSFQRNLFNDFLIAFVEEIKSAATNTSEMDGSGDVGGSESSKFLWLRGRFCHVLLAHAETLLKHSSSIAEEVFSEGADPNISECFNQFQSLRF</sequence>
<keyword id="KW-0506">mRNA capping</keyword>
<keyword id="KW-0507">mRNA processing</keyword>
<keyword id="KW-0508">mRNA splicing</keyword>
<keyword id="KW-0539">Nucleus</keyword>
<keyword id="KW-1185">Reference proteome</keyword>
<keyword id="KW-0943">RNA-mediated gene silencing</keyword>
<proteinExistence type="inferred from homology"/>
<evidence type="ECO:0000250" key="1"/>
<evidence type="ECO:0000305" key="2"/>
<comment type="function">
    <text evidence="1">Component of the cap-binding complex (CBC), which binds cotranscriptionally to the 5'-cap of pre-mRNAs and is involved in various processes such as pre-mRNA splicing and RNA-mediated gene silencing (RNAi). The CBC complex is involved in miRNA-mediated RNA interference and is required for primary microRNAs (miRNAs) processing. In the CBC complex, ncbp-1 does not bind directly capped RNAs (m7GpppG-capped RNA) but is required to stabilize the movement of the N-terminal loop of ncbp-2 and lock the CBC into a high affinity cap-binding state with the cap structure (By similarity).</text>
</comment>
<comment type="subunit">
    <text evidence="1">Component of the nuclear cap-binding complex (CBC), a heterodimer composed of ncbp-1 and ncbp-1 that interacts with m7GpppG-capped RNA.</text>
</comment>
<comment type="subcellular location">
    <subcellularLocation>
        <location evidence="1">Nucleus</location>
    </subcellularLocation>
</comment>
<comment type="similarity">
    <text evidence="2">Belongs to the NCBP1 family.</text>
</comment>
<comment type="sequence caution" evidence="2">
    <conflict type="erroneous gene model prediction">
        <sequence resource="EMBL-CDS" id="CAP31569"/>
    </conflict>
</comment>
<reference key="1">
    <citation type="journal article" date="2003" name="PLoS Biol.">
        <title>The genome sequence of Caenorhabditis briggsae: a platform for comparative genomics.</title>
        <authorList>
            <person name="Stein L.D."/>
            <person name="Bao Z."/>
            <person name="Blasiar D."/>
            <person name="Blumenthal T."/>
            <person name="Brent M.R."/>
            <person name="Chen N."/>
            <person name="Chinwalla A."/>
            <person name="Clarke L."/>
            <person name="Clee C."/>
            <person name="Coghlan A."/>
            <person name="Coulson A."/>
            <person name="D'Eustachio P."/>
            <person name="Fitch D.H.A."/>
            <person name="Fulton L.A."/>
            <person name="Fulton R.E."/>
            <person name="Griffiths-Jones S."/>
            <person name="Harris T.W."/>
            <person name="Hillier L.W."/>
            <person name="Kamath R."/>
            <person name="Kuwabara P.E."/>
            <person name="Mardis E.R."/>
            <person name="Marra M.A."/>
            <person name="Miner T.L."/>
            <person name="Minx P."/>
            <person name="Mullikin J.C."/>
            <person name="Plumb R.W."/>
            <person name="Rogers J."/>
            <person name="Schein J.E."/>
            <person name="Sohrmann M."/>
            <person name="Spieth J."/>
            <person name="Stajich J.E."/>
            <person name="Wei C."/>
            <person name="Willey D."/>
            <person name="Wilson R.K."/>
            <person name="Durbin R.M."/>
            <person name="Waterston R.H."/>
        </authorList>
    </citation>
    <scope>NUCLEOTIDE SEQUENCE [LARGE SCALE GENOMIC DNA]</scope>
    <source>
        <strain>AF16</strain>
    </source>
</reference>
<name>NCBP1_CAEBR</name>
<feature type="chain" id="PRO_0000385243" description="Nuclear cap-binding protein subunit 1">
    <location>
        <begin position="1"/>
        <end position="793"/>
    </location>
</feature>
<feature type="domain" description="MIF4G">
    <location>
        <begin position="28"/>
        <end position="242"/>
    </location>
</feature>
<organism>
    <name type="scientific">Caenorhabditis briggsae</name>
    <dbReference type="NCBI Taxonomy" id="6238"/>
    <lineage>
        <taxon>Eukaryota</taxon>
        <taxon>Metazoa</taxon>
        <taxon>Ecdysozoa</taxon>
        <taxon>Nematoda</taxon>
        <taxon>Chromadorea</taxon>
        <taxon>Rhabditida</taxon>
        <taxon>Rhabditina</taxon>
        <taxon>Rhabditomorpha</taxon>
        <taxon>Rhabditoidea</taxon>
        <taxon>Rhabditidae</taxon>
        <taxon>Peloderinae</taxon>
        <taxon>Caenorhabditis</taxon>
    </lineage>
</organism>
<dbReference type="EMBL" id="HE600940">
    <property type="protein sequence ID" value="CAP31569.2"/>
    <property type="status" value="ALT_SEQ"/>
    <property type="molecule type" value="Genomic_DNA"/>
</dbReference>
<dbReference type="RefSeq" id="XP_002640122.1">
    <property type="nucleotide sequence ID" value="XM_002640076.1"/>
</dbReference>
<dbReference type="SMR" id="A8XG63"/>
<dbReference type="FunCoup" id="A8XG63">
    <property type="interactions" value="3416"/>
</dbReference>
<dbReference type="STRING" id="6238.A8XG63"/>
<dbReference type="EnsemblMetazoa" id="CBG12621.1">
    <property type="protein sequence ID" value="CBG12621.1"/>
    <property type="gene ID" value="WBGene00033539"/>
</dbReference>
<dbReference type="WormBase" id="CBG12621">
    <property type="protein sequence ID" value="CBP17552"/>
    <property type="gene ID" value="WBGene00033539"/>
    <property type="gene designation" value="Cbr-ncbp-1"/>
</dbReference>
<dbReference type="eggNOG" id="KOG1104">
    <property type="taxonomic scope" value="Eukaryota"/>
</dbReference>
<dbReference type="HOGENOM" id="CLU_013207_0_0_1"/>
<dbReference type="InParanoid" id="A8XG63"/>
<dbReference type="Proteomes" id="UP000008549">
    <property type="component" value="Unassembled WGS sequence"/>
</dbReference>
<dbReference type="GO" id="GO:0005846">
    <property type="term" value="C:nuclear cap binding complex"/>
    <property type="evidence" value="ECO:0000318"/>
    <property type="project" value="GO_Central"/>
</dbReference>
<dbReference type="GO" id="GO:0005634">
    <property type="term" value="C:nucleus"/>
    <property type="evidence" value="ECO:0000318"/>
    <property type="project" value="GO_Central"/>
</dbReference>
<dbReference type="GO" id="GO:0003729">
    <property type="term" value="F:mRNA binding"/>
    <property type="evidence" value="ECO:0000318"/>
    <property type="project" value="GO_Central"/>
</dbReference>
<dbReference type="GO" id="GO:0000339">
    <property type="term" value="F:RNA cap binding"/>
    <property type="evidence" value="ECO:0000318"/>
    <property type="project" value="GO_Central"/>
</dbReference>
<dbReference type="GO" id="GO:0006370">
    <property type="term" value="P:7-methylguanosine mRNA capping"/>
    <property type="evidence" value="ECO:0007669"/>
    <property type="project" value="UniProtKB-KW"/>
</dbReference>
<dbReference type="GO" id="GO:0006406">
    <property type="term" value="P:mRNA export from nucleus"/>
    <property type="evidence" value="ECO:0007669"/>
    <property type="project" value="InterPro"/>
</dbReference>
<dbReference type="GO" id="GO:0000184">
    <property type="term" value="P:nuclear-transcribed mRNA catabolic process, nonsense-mediated decay"/>
    <property type="evidence" value="ECO:0000318"/>
    <property type="project" value="GO_Central"/>
</dbReference>
<dbReference type="GO" id="GO:0031053">
    <property type="term" value="P:primary miRNA processing"/>
    <property type="evidence" value="ECO:0007669"/>
    <property type="project" value="EnsemblMetazoa"/>
</dbReference>
<dbReference type="GO" id="GO:0008380">
    <property type="term" value="P:RNA splicing"/>
    <property type="evidence" value="ECO:0007669"/>
    <property type="project" value="UniProtKB-KW"/>
</dbReference>
<dbReference type="FunFam" id="1.25.40.180:FF:000010">
    <property type="entry name" value="Nuclear cap-binding protein subunit 1"/>
    <property type="match status" value="1"/>
</dbReference>
<dbReference type="FunFam" id="1.25.40.180:FF:000041">
    <property type="entry name" value="Nuclear cap-binding protein subunit 1"/>
    <property type="match status" value="1"/>
</dbReference>
<dbReference type="Gene3D" id="1.25.40.180">
    <property type="match status" value="3"/>
</dbReference>
<dbReference type="InterPro" id="IPR016024">
    <property type="entry name" value="ARM-type_fold"/>
</dbReference>
<dbReference type="InterPro" id="IPR027159">
    <property type="entry name" value="CBP80"/>
</dbReference>
<dbReference type="InterPro" id="IPR015172">
    <property type="entry name" value="MIF4G-like_typ-1"/>
</dbReference>
<dbReference type="InterPro" id="IPR015174">
    <property type="entry name" value="MIF4G-like_typ-2"/>
</dbReference>
<dbReference type="InterPro" id="IPR003890">
    <property type="entry name" value="MIF4G-like_typ-3"/>
</dbReference>
<dbReference type="PANTHER" id="PTHR12412">
    <property type="entry name" value="CAP BINDING PROTEIN"/>
    <property type="match status" value="1"/>
</dbReference>
<dbReference type="PANTHER" id="PTHR12412:SF2">
    <property type="entry name" value="NUCLEAR CAP-BINDING PROTEIN SUBUNIT 1"/>
    <property type="match status" value="1"/>
</dbReference>
<dbReference type="Pfam" id="PF02854">
    <property type="entry name" value="MIF4G"/>
    <property type="match status" value="1"/>
</dbReference>
<dbReference type="Pfam" id="PF09088">
    <property type="entry name" value="MIF4G_like"/>
    <property type="match status" value="1"/>
</dbReference>
<dbReference type="Pfam" id="PF09090">
    <property type="entry name" value="MIF4G_like_2"/>
    <property type="match status" value="1"/>
</dbReference>
<dbReference type="SMART" id="SM00543">
    <property type="entry name" value="MIF4G"/>
    <property type="match status" value="1"/>
</dbReference>
<dbReference type="SUPFAM" id="SSF48371">
    <property type="entry name" value="ARM repeat"/>
    <property type="match status" value="3"/>
</dbReference>
<gene>
    <name type="primary">ncbp-1</name>
    <name type="synonym">cbp-80</name>
    <name type="ORF">CBG12621</name>
</gene>